<comment type="subcellular location">
    <subcellularLocation>
        <location evidence="1">Cell inner membrane</location>
        <topology evidence="1">Multi-pass membrane protein</topology>
    </subcellularLocation>
</comment>
<comment type="similarity">
    <text evidence="3">Belongs to the UPF0126 family.</text>
</comment>
<comment type="sequence caution" evidence="3">
    <conflict type="erroneous initiation">
        <sequence resource="EMBL-CDS" id="AAN82906"/>
    </conflict>
</comment>
<organism>
    <name type="scientific">Escherichia coli O6:H1 (strain CFT073 / ATCC 700928 / UPEC)</name>
    <dbReference type="NCBI Taxonomy" id="199310"/>
    <lineage>
        <taxon>Bacteria</taxon>
        <taxon>Pseudomonadati</taxon>
        <taxon>Pseudomonadota</taxon>
        <taxon>Gammaproteobacteria</taxon>
        <taxon>Enterobacterales</taxon>
        <taxon>Enterobacteriaceae</taxon>
        <taxon>Escherichia</taxon>
    </lineage>
</organism>
<evidence type="ECO:0000250" key="1"/>
<evidence type="ECO:0000255" key="2"/>
<evidence type="ECO:0000305" key="3"/>
<gene>
    <name type="primary">yicG</name>
    <name type="ordered locus">c4470</name>
</gene>
<reference key="1">
    <citation type="journal article" date="2002" name="Proc. Natl. Acad. Sci. U.S.A.">
        <title>Extensive mosaic structure revealed by the complete genome sequence of uropathogenic Escherichia coli.</title>
        <authorList>
            <person name="Welch R.A."/>
            <person name="Burland V."/>
            <person name="Plunkett G. III"/>
            <person name="Redford P."/>
            <person name="Roesch P."/>
            <person name="Rasko D."/>
            <person name="Buckles E.L."/>
            <person name="Liou S.-R."/>
            <person name="Boutin A."/>
            <person name="Hackett J."/>
            <person name="Stroud D."/>
            <person name="Mayhew G.F."/>
            <person name="Rose D.J."/>
            <person name="Zhou S."/>
            <person name="Schwartz D.C."/>
            <person name="Perna N.T."/>
            <person name="Mobley H.L.T."/>
            <person name="Donnenberg M.S."/>
            <person name="Blattner F.R."/>
        </authorList>
    </citation>
    <scope>NUCLEOTIDE SEQUENCE [LARGE SCALE GENOMIC DNA]</scope>
    <source>
        <strain>CFT073 / ATCC 700928 / UPEC</strain>
    </source>
</reference>
<proteinExistence type="inferred from homology"/>
<keyword id="KW-0997">Cell inner membrane</keyword>
<keyword id="KW-1003">Cell membrane</keyword>
<keyword id="KW-0472">Membrane</keyword>
<keyword id="KW-1185">Reference proteome</keyword>
<keyword id="KW-0812">Transmembrane</keyword>
<keyword id="KW-1133">Transmembrane helix</keyword>
<accession>P0AGM3</accession>
<accession>P31432</accession>
<accession>P76720</accession>
<feature type="chain" id="PRO_0000166300" description="UPF0126 inner membrane protein YicG">
    <location>
        <begin position="1"/>
        <end position="205"/>
    </location>
</feature>
<feature type="topological domain" description="Cytoplasmic" evidence="2">
    <location>
        <begin position="1"/>
        <end position="29"/>
    </location>
</feature>
<feature type="transmembrane region" description="Helical" evidence="2">
    <location>
        <begin position="30"/>
        <end position="50"/>
    </location>
</feature>
<feature type="topological domain" description="Periplasmic" evidence="2">
    <location>
        <begin position="51"/>
        <end position="64"/>
    </location>
</feature>
<feature type="transmembrane region" description="Helical" evidence="2">
    <location>
        <begin position="65"/>
        <end position="85"/>
    </location>
</feature>
<feature type="topological domain" description="Cytoplasmic" evidence="2">
    <location>
        <begin position="86"/>
        <end position="87"/>
    </location>
</feature>
<feature type="transmembrane region" description="Helical" evidence="2">
    <location>
        <begin position="88"/>
        <end position="108"/>
    </location>
</feature>
<feature type="topological domain" description="Periplasmic" evidence="2">
    <location>
        <begin position="109"/>
        <end position="111"/>
    </location>
</feature>
<feature type="transmembrane region" description="Helical" evidence="2">
    <location>
        <begin position="112"/>
        <end position="132"/>
    </location>
</feature>
<feature type="topological domain" description="Cytoplasmic" evidence="2">
    <location>
        <begin position="133"/>
        <end position="147"/>
    </location>
</feature>
<feature type="transmembrane region" description="Helical" evidence="2">
    <location>
        <begin position="148"/>
        <end position="168"/>
    </location>
</feature>
<feature type="transmembrane region" description="Helical" evidence="2">
    <location>
        <begin position="169"/>
        <end position="189"/>
    </location>
</feature>
<feature type="topological domain" description="Cytoplasmic" evidence="2">
    <location>
        <begin position="190"/>
        <end position="205"/>
    </location>
</feature>
<sequence length="205" mass="22048">MLLHILYLVGITAEAMTGALAAGRRRMDTFGVIIIATATAIGGGSVRDILLGHYPLGWVKHPEYVIIVATAAVLTTIVAPVMPYLRKVFLVLDALGLVVFSIIGAQVALDMGHGPIIAVVAAVTTGVFGGVLRDMFCKRIPLVFQKELYAGVSFASAVLYIALQHYVSNHDVVIISTLVFGFFARLLALRLKLGLPVFYYSHEGH</sequence>
<protein>
    <recommendedName>
        <fullName>UPF0126 inner membrane protein YicG</fullName>
    </recommendedName>
</protein>
<dbReference type="EMBL" id="AE014075">
    <property type="protein sequence ID" value="AAN82906.1"/>
    <property type="status" value="ALT_INIT"/>
    <property type="molecule type" value="Genomic_DNA"/>
</dbReference>
<dbReference type="RefSeq" id="WP_000924289.1">
    <property type="nucleotide sequence ID" value="NZ_CP051263.1"/>
</dbReference>
<dbReference type="SMR" id="P0AGM3"/>
<dbReference type="STRING" id="199310.c4470"/>
<dbReference type="KEGG" id="ecc:c4470"/>
<dbReference type="eggNOG" id="COG2860">
    <property type="taxonomic scope" value="Bacteria"/>
</dbReference>
<dbReference type="HOGENOM" id="CLU_064906_2_0_6"/>
<dbReference type="Proteomes" id="UP000001410">
    <property type="component" value="Chromosome"/>
</dbReference>
<dbReference type="GO" id="GO:0005886">
    <property type="term" value="C:plasma membrane"/>
    <property type="evidence" value="ECO:0007669"/>
    <property type="project" value="UniProtKB-SubCell"/>
</dbReference>
<dbReference type="InterPro" id="IPR005115">
    <property type="entry name" value="Gly_transporter"/>
</dbReference>
<dbReference type="PANTHER" id="PTHR30506">
    <property type="entry name" value="INNER MEMBRANE PROTEIN"/>
    <property type="match status" value="1"/>
</dbReference>
<dbReference type="PANTHER" id="PTHR30506:SF3">
    <property type="entry name" value="UPF0126 INNER MEMBRANE PROTEIN YADS-RELATED"/>
    <property type="match status" value="1"/>
</dbReference>
<dbReference type="Pfam" id="PF03458">
    <property type="entry name" value="Gly_transporter"/>
    <property type="match status" value="2"/>
</dbReference>
<name>YICG_ECOL6</name>